<protein>
    <recommendedName>
        <fullName evidence="1">ATP-dependent dethiobiotin synthetase BioD</fullName>
        <ecNumber evidence="1">6.3.3.3</ecNumber>
    </recommendedName>
    <alternativeName>
        <fullName evidence="1">DTB synthetase</fullName>
        <shortName evidence="1">DTBS</shortName>
    </alternativeName>
    <alternativeName>
        <fullName evidence="1">Dethiobiotin synthase</fullName>
    </alternativeName>
</protein>
<name>BIOD_SACEN</name>
<feature type="chain" id="PRO_0000302549" description="ATP-dependent dethiobiotin synthetase BioD">
    <location>
        <begin position="1"/>
        <end position="224"/>
    </location>
</feature>
<feature type="active site" evidence="1">
    <location>
        <position position="34"/>
    </location>
</feature>
<feature type="binding site" evidence="1">
    <location>
        <begin position="12"/>
        <end position="17"/>
    </location>
    <ligand>
        <name>ATP</name>
        <dbReference type="ChEBI" id="CHEBI:30616"/>
    </ligand>
</feature>
<feature type="binding site" evidence="1">
    <location>
        <position position="16"/>
    </location>
    <ligand>
        <name>Mg(2+)</name>
        <dbReference type="ChEBI" id="CHEBI:18420"/>
    </ligand>
</feature>
<feature type="binding site" evidence="1">
    <location>
        <position position="38"/>
    </location>
    <ligand>
        <name>substrate</name>
    </ligand>
</feature>
<feature type="binding site" evidence="1">
    <location>
        <position position="47"/>
    </location>
    <ligand>
        <name>ATP</name>
        <dbReference type="ChEBI" id="CHEBI:30616"/>
    </ligand>
</feature>
<feature type="binding site" evidence="1">
    <location>
        <position position="47"/>
    </location>
    <ligand>
        <name>Mg(2+)</name>
        <dbReference type="ChEBI" id="CHEBI:18420"/>
    </ligand>
</feature>
<feature type="binding site" evidence="1">
    <location>
        <begin position="106"/>
        <end position="109"/>
    </location>
    <ligand>
        <name>ATP</name>
        <dbReference type="ChEBI" id="CHEBI:30616"/>
    </ligand>
</feature>
<feature type="binding site" evidence="1">
    <location>
        <position position="106"/>
    </location>
    <ligand>
        <name>Mg(2+)</name>
        <dbReference type="ChEBI" id="CHEBI:18420"/>
    </ligand>
</feature>
<feature type="binding site" evidence="1">
    <location>
        <begin position="166"/>
        <end position="167"/>
    </location>
    <ligand>
        <name>ATP</name>
        <dbReference type="ChEBI" id="CHEBI:30616"/>
    </ligand>
</feature>
<feature type="binding site" evidence="1">
    <location>
        <begin position="196"/>
        <end position="198"/>
    </location>
    <ligand>
        <name>ATP</name>
        <dbReference type="ChEBI" id="CHEBI:30616"/>
    </ligand>
</feature>
<organism>
    <name type="scientific">Saccharopolyspora erythraea (strain ATCC 11635 / DSM 40517 / JCM 4748 / NBRC 13426 / NCIMB 8594 / NRRL 2338)</name>
    <dbReference type="NCBI Taxonomy" id="405948"/>
    <lineage>
        <taxon>Bacteria</taxon>
        <taxon>Bacillati</taxon>
        <taxon>Actinomycetota</taxon>
        <taxon>Actinomycetes</taxon>
        <taxon>Pseudonocardiales</taxon>
        <taxon>Pseudonocardiaceae</taxon>
        <taxon>Saccharopolyspora</taxon>
    </lineage>
</organism>
<gene>
    <name evidence="1" type="primary">bioD</name>
    <name type="ordered locus">SACE_0978</name>
</gene>
<reference key="1">
    <citation type="journal article" date="2007" name="Nat. Biotechnol.">
        <title>Complete genome sequence of the erythromycin-producing bacterium Saccharopolyspora erythraea NRRL23338.</title>
        <authorList>
            <person name="Oliynyk M."/>
            <person name="Samborskyy M."/>
            <person name="Lester J.B."/>
            <person name="Mironenko T."/>
            <person name="Scott N."/>
            <person name="Dickens S."/>
            <person name="Haydock S.F."/>
            <person name="Leadlay P.F."/>
        </authorList>
    </citation>
    <scope>NUCLEOTIDE SEQUENCE [LARGE SCALE GENOMIC DNA]</scope>
    <source>
        <strain>ATCC 11635 / DSM 40517 / JCM 4748 / NBRC 13426 / NCIMB 8594 / NRRL 2338</strain>
    </source>
</reference>
<comment type="function">
    <text evidence="1">Catalyzes a mechanistically unusual reaction, the ATP-dependent insertion of CO2 between the N7 and N8 nitrogen atoms of 7,8-diaminopelargonic acid (DAPA, also called 7,8-diammoniononanoate) to form a ureido ring.</text>
</comment>
<comment type="catalytic activity">
    <reaction evidence="1">
        <text>(7R,8S)-7,8-diammoniononanoate + CO2 + ATP = (4R,5S)-dethiobiotin + ADP + phosphate + 3 H(+)</text>
        <dbReference type="Rhea" id="RHEA:15805"/>
        <dbReference type="ChEBI" id="CHEBI:15378"/>
        <dbReference type="ChEBI" id="CHEBI:16526"/>
        <dbReference type="ChEBI" id="CHEBI:30616"/>
        <dbReference type="ChEBI" id="CHEBI:43474"/>
        <dbReference type="ChEBI" id="CHEBI:149469"/>
        <dbReference type="ChEBI" id="CHEBI:149473"/>
        <dbReference type="ChEBI" id="CHEBI:456216"/>
        <dbReference type="EC" id="6.3.3.3"/>
    </reaction>
</comment>
<comment type="cofactor">
    <cofactor evidence="1">
        <name>Mg(2+)</name>
        <dbReference type="ChEBI" id="CHEBI:18420"/>
    </cofactor>
</comment>
<comment type="pathway">
    <text evidence="1">Cofactor biosynthesis; biotin biosynthesis; biotin from 7,8-diaminononanoate: step 1/2.</text>
</comment>
<comment type="subunit">
    <text evidence="1">Homodimer.</text>
</comment>
<comment type="subcellular location">
    <subcellularLocation>
        <location evidence="1">Cytoplasm</location>
    </subcellularLocation>
</comment>
<comment type="similarity">
    <text evidence="1">Belongs to the dethiobiotin synthetase family.</text>
</comment>
<accession>A4F8D5</accession>
<proteinExistence type="inferred from homology"/>
<evidence type="ECO:0000255" key="1">
    <source>
        <dbReference type="HAMAP-Rule" id="MF_00336"/>
    </source>
</evidence>
<dbReference type="EC" id="6.3.3.3" evidence="1"/>
<dbReference type="EMBL" id="AM420293">
    <property type="protein sequence ID" value="CAM00310.1"/>
    <property type="molecule type" value="Genomic_DNA"/>
</dbReference>
<dbReference type="RefSeq" id="WP_009950229.1">
    <property type="nucleotide sequence ID" value="NC_009142.1"/>
</dbReference>
<dbReference type="SMR" id="A4F8D5"/>
<dbReference type="STRING" id="405948.SACE_0978"/>
<dbReference type="KEGG" id="sen:SACE_0978"/>
<dbReference type="eggNOG" id="COG0132">
    <property type="taxonomic scope" value="Bacteria"/>
</dbReference>
<dbReference type="HOGENOM" id="CLU_072551_1_0_11"/>
<dbReference type="OrthoDB" id="9802610at2"/>
<dbReference type="UniPathway" id="UPA00078">
    <property type="reaction ID" value="UER00161"/>
</dbReference>
<dbReference type="Proteomes" id="UP000006728">
    <property type="component" value="Chromosome"/>
</dbReference>
<dbReference type="GO" id="GO:0005829">
    <property type="term" value="C:cytosol"/>
    <property type="evidence" value="ECO:0007669"/>
    <property type="project" value="TreeGrafter"/>
</dbReference>
<dbReference type="GO" id="GO:0005524">
    <property type="term" value="F:ATP binding"/>
    <property type="evidence" value="ECO:0007669"/>
    <property type="project" value="UniProtKB-UniRule"/>
</dbReference>
<dbReference type="GO" id="GO:0004141">
    <property type="term" value="F:dethiobiotin synthase activity"/>
    <property type="evidence" value="ECO:0007669"/>
    <property type="project" value="UniProtKB-UniRule"/>
</dbReference>
<dbReference type="GO" id="GO:0000287">
    <property type="term" value="F:magnesium ion binding"/>
    <property type="evidence" value="ECO:0007669"/>
    <property type="project" value="UniProtKB-UniRule"/>
</dbReference>
<dbReference type="GO" id="GO:0009102">
    <property type="term" value="P:biotin biosynthetic process"/>
    <property type="evidence" value="ECO:0007669"/>
    <property type="project" value="UniProtKB-UniRule"/>
</dbReference>
<dbReference type="CDD" id="cd03109">
    <property type="entry name" value="DTBS"/>
    <property type="match status" value="1"/>
</dbReference>
<dbReference type="Gene3D" id="3.40.50.300">
    <property type="entry name" value="P-loop containing nucleotide triphosphate hydrolases"/>
    <property type="match status" value="1"/>
</dbReference>
<dbReference type="HAMAP" id="MF_00336">
    <property type="entry name" value="BioD"/>
    <property type="match status" value="1"/>
</dbReference>
<dbReference type="InterPro" id="IPR004472">
    <property type="entry name" value="DTB_synth_BioD"/>
</dbReference>
<dbReference type="InterPro" id="IPR027417">
    <property type="entry name" value="P-loop_NTPase"/>
</dbReference>
<dbReference type="NCBIfam" id="TIGR00347">
    <property type="entry name" value="bioD"/>
    <property type="match status" value="1"/>
</dbReference>
<dbReference type="PANTHER" id="PTHR43210">
    <property type="entry name" value="DETHIOBIOTIN SYNTHETASE"/>
    <property type="match status" value="1"/>
</dbReference>
<dbReference type="PANTHER" id="PTHR43210:SF5">
    <property type="entry name" value="DETHIOBIOTIN SYNTHETASE"/>
    <property type="match status" value="1"/>
</dbReference>
<dbReference type="Pfam" id="PF13500">
    <property type="entry name" value="AAA_26"/>
    <property type="match status" value="1"/>
</dbReference>
<dbReference type="PIRSF" id="PIRSF006755">
    <property type="entry name" value="DTB_synth"/>
    <property type="match status" value="1"/>
</dbReference>
<dbReference type="SUPFAM" id="SSF52540">
    <property type="entry name" value="P-loop containing nucleoside triphosphate hydrolases"/>
    <property type="match status" value="1"/>
</dbReference>
<keyword id="KW-0067">ATP-binding</keyword>
<keyword id="KW-0093">Biotin biosynthesis</keyword>
<keyword id="KW-0963">Cytoplasm</keyword>
<keyword id="KW-0436">Ligase</keyword>
<keyword id="KW-0460">Magnesium</keyword>
<keyword id="KW-0479">Metal-binding</keyword>
<keyword id="KW-0547">Nucleotide-binding</keyword>
<keyword id="KW-1185">Reference proteome</keyword>
<sequence>MSVLVITGTGTEVGKTVVTAAIAALAPGRVAVLKAAQTGVAAGEDGDVAEVARLAGPVTAVELARYPEPLAPATAARRAGAPPVRPAQVAEAARELDREHDLVLVEGAGGLLVRYDDGGTLADVAVALSAPVLVVAHGGLGTLNAAALTAEALRARGVECAGVVVGSWPSAPDLACRCNLDDLPEVTGAPLLGVLPEGAAADPAAFGDIARAGLAPALGGRWSR</sequence>